<evidence type="ECO:0000250" key="1">
    <source>
        <dbReference type="UniProtKB" id="Q04573"/>
    </source>
</evidence>
<evidence type="ECO:0000255" key="2"/>
<evidence type="ECO:0000255" key="3">
    <source>
        <dbReference type="PROSITE-ProRule" id="PRU00521"/>
    </source>
</evidence>
<evidence type="ECO:0000269" key="4">
    <source ref="2"/>
</evidence>
<evidence type="ECO:0007744" key="5">
    <source>
    </source>
</evidence>
<organism>
    <name type="scientific">Rattus norvegicus</name>
    <name type="common">Rat</name>
    <dbReference type="NCBI Taxonomy" id="10116"/>
    <lineage>
        <taxon>Eukaryota</taxon>
        <taxon>Metazoa</taxon>
        <taxon>Chordata</taxon>
        <taxon>Craniata</taxon>
        <taxon>Vertebrata</taxon>
        <taxon>Euteleostomi</taxon>
        <taxon>Mammalia</taxon>
        <taxon>Eutheria</taxon>
        <taxon>Euarchontoglires</taxon>
        <taxon>Glires</taxon>
        <taxon>Rodentia</taxon>
        <taxon>Myomorpha</taxon>
        <taxon>Muroidea</taxon>
        <taxon>Muridae</taxon>
        <taxon>Murinae</taxon>
        <taxon>Rattus</taxon>
    </lineage>
</organism>
<proteinExistence type="evidence at protein level"/>
<name>NPY1R_RAT</name>
<feature type="chain" id="PRO_0000069923" description="Neuropeptide Y receptor type 1">
    <location>
        <begin position="1"/>
        <end position="382"/>
    </location>
</feature>
<feature type="topological domain" description="Extracellular" evidence="2">
    <location>
        <begin position="1"/>
        <end position="33"/>
    </location>
</feature>
<feature type="transmembrane region" description="Helical; Name=1" evidence="2">
    <location>
        <begin position="34"/>
        <end position="54"/>
    </location>
</feature>
<feature type="topological domain" description="Cytoplasmic" evidence="2">
    <location>
        <begin position="55"/>
        <end position="75"/>
    </location>
</feature>
<feature type="transmembrane region" description="Helical; Name=2" evidence="2">
    <location>
        <begin position="76"/>
        <end position="96"/>
    </location>
</feature>
<feature type="topological domain" description="Extracellular" evidence="2">
    <location>
        <begin position="97"/>
        <end position="115"/>
    </location>
</feature>
<feature type="transmembrane region" description="Helical; Name=3" evidence="2">
    <location>
        <begin position="116"/>
        <end position="136"/>
    </location>
</feature>
<feature type="topological domain" description="Cytoplasmic" evidence="2">
    <location>
        <begin position="137"/>
        <end position="153"/>
    </location>
</feature>
<feature type="transmembrane region" description="Helical; Name=4" evidence="2">
    <location>
        <begin position="154"/>
        <end position="174"/>
    </location>
</feature>
<feature type="topological domain" description="Extracellular" evidence="2">
    <location>
        <begin position="175"/>
        <end position="210"/>
    </location>
</feature>
<feature type="transmembrane region" description="Helical; Name=5" evidence="2">
    <location>
        <begin position="211"/>
        <end position="231"/>
    </location>
</feature>
<feature type="topological domain" description="Cytoplasmic" evidence="2">
    <location>
        <begin position="232"/>
        <end position="259"/>
    </location>
</feature>
<feature type="transmembrane region" description="Helical; Name=6" evidence="2">
    <location>
        <begin position="260"/>
        <end position="280"/>
    </location>
</feature>
<feature type="topological domain" description="Extracellular" evidence="2">
    <location>
        <begin position="281"/>
        <end position="298"/>
    </location>
</feature>
<feature type="transmembrane region" description="Helical; Name=7" evidence="2">
    <location>
        <begin position="299"/>
        <end position="319"/>
    </location>
</feature>
<feature type="topological domain" description="Cytoplasmic" evidence="2">
    <location>
        <begin position="320"/>
        <end position="382"/>
    </location>
</feature>
<feature type="modified residue" description="Phosphoserine" evidence="5">
    <location>
        <position position="367"/>
    </location>
</feature>
<feature type="modified residue" description="Phosphoserine" evidence="1">
    <location>
        <position position="375"/>
    </location>
</feature>
<feature type="lipid moiety-binding region" description="S-palmitoyl cysteine" evidence="2">
    <location>
        <position position="337"/>
    </location>
</feature>
<feature type="glycosylation site" description="N-linked (GlcNAc...) asparagine" evidence="2">
    <location>
        <position position="2"/>
    </location>
</feature>
<feature type="glycosylation site" description="N-linked (GlcNAc...) asparagine" evidence="2">
    <location>
        <position position="11"/>
    </location>
</feature>
<feature type="glycosylation site" description="N-linked (GlcNAc...) asparagine" evidence="2">
    <location>
        <position position="17"/>
    </location>
</feature>
<feature type="disulfide bond" evidence="3">
    <location>
        <begin position="112"/>
        <end position="197"/>
    </location>
</feature>
<protein>
    <recommendedName>
        <fullName>Neuropeptide Y receptor type 1</fullName>
        <shortName>NPY1-R</shortName>
    </recommendedName>
    <alternativeName>
        <fullName>FC5</fullName>
    </alternativeName>
</protein>
<accession>P21555</accession>
<comment type="function">
    <text evidence="4">Receptor for neuropeptide Y and peptide YY.</text>
</comment>
<comment type="subcellular location">
    <subcellularLocation>
        <location>Cell membrane</location>
        <topology>Multi-pass membrane protein</topology>
    </subcellularLocation>
</comment>
<comment type="tissue specificity">
    <text>Brain.</text>
</comment>
<comment type="similarity">
    <text evidence="3">Belongs to the G-protein coupled receptor 1 family.</text>
</comment>
<sequence>MNSTLFSRVENYSVHYNVSENSPFLAFENDDCHLPLAVIFTLALAYGAVIILGVSGNLALIIIILKQKEMRNVTNILIVNLSFSDLLVAVMCLPFTFVYTLMDHWVFGETMCKLNPFVQCVSITVSIFSLVLIAVERHQLIINPRGWRPNNRHAYIGITVIWVLAVASSLPFVIYQILTDEPFQNVSLAAFKDKYVCFDKFPSDSHRLSYTTLLLVLQYFGPLCFIFICYFKIYIRLKRRNNMMDKIRDSKYRSSETKRINVMLLSIVVAFAVCWLPLTIFNTVFDWNHQIIATCNHNLLFLLCHLTAMISTCVNPIFYGFLNKNFQRDLQFFFNFCDFRSRDDDYETIAMSTMHTDVSKTSLKQASPVAFKKISMNDNEKI</sequence>
<keyword id="KW-1003">Cell membrane</keyword>
<keyword id="KW-1015">Disulfide bond</keyword>
<keyword id="KW-0297">G-protein coupled receptor</keyword>
<keyword id="KW-0325">Glycoprotein</keyword>
<keyword id="KW-0449">Lipoprotein</keyword>
<keyword id="KW-0472">Membrane</keyword>
<keyword id="KW-0564">Palmitate</keyword>
<keyword id="KW-0597">Phosphoprotein</keyword>
<keyword id="KW-0675">Receptor</keyword>
<keyword id="KW-1185">Reference proteome</keyword>
<keyword id="KW-0807">Transducer</keyword>
<keyword id="KW-0812">Transmembrane</keyword>
<keyword id="KW-1133">Transmembrane helix</keyword>
<reference key="1">
    <citation type="journal article" date="1990" name="FEBS Lett.">
        <title>Molecular cloning of a novel G protein-coupled receptor that may belong to the neuropeptide receptor family.</title>
        <authorList>
            <person name="Eva C."/>
            <person name="Keinaenen K."/>
            <person name="Monyer H."/>
            <person name="Seeburg P.H."/>
            <person name="Sprengel R."/>
        </authorList>
    </citation>
    <scope>NUCLEOTIDE SEQUENCE [MRNA]</scope>
    <source>
        <tissue>Brain</tissue>
    </source>
</reference>
<reference key="2">
    <citation type="submission" date="1991-11" db="EMBL/GenBank/DDBJ databases">
        <authorList>
            <person name="Krause J.E."/>
            <person name="Eva C."/>
            <person name="Seeburg P.H."/>
            <person name="Sprengel R."/>
        </authorList>
    </citation>
    <scope>SEQUENCE REVISION</scope>
    <scope>FUNCTION</scope>
</reference>
<reference key="3">
    <citation type="journal article" date="2012" name="Nat. Commun.">
        <title>Quantitative maps of protein phosphorylation sites across 14 different rat organs and tissues.</title>
        <authorList>
            <person name="Lundby A."/>
            <person name="Secher A."/>
            <person name="Lage K."/>
            <person name="Nordsborg N.B."/>
            <person name="Dmytriyev A."/>
            <person name="Lundby C."/>
            <person name="Olsen J.V."/>
        </authorList>
    </citation>
    <scope>PHOSPHORYLATION [LARGE SCALE ANALYSIS] AT SER-367</scope>
    <scope>IDENTIFICATION BY MASS SPECTROMETRY [LARGE SCALE ANALYSIS]</scope>
</reference>
<gene>
    <name type="primary">Npy1r</name>
</gene>
<dbReference type="EMBL" id="Z11504">
    <property type="protein sequence ID" value="CAA77579.1"/>
    <property type="molecule type" value="mRNA"/>
</dbReference>
<dbReference type="PIR" id="S12863">
    <property type="entry name" value="S12863"/>
</dbReference>
<dbReference type="SMR" id="P21555"/>
<dbReference type="CORUM" id="P21555"/>
<dbReference type="FunCoup" id="P21555">
    <property type="interactions" value="610"/>
</dbReference>
<dbReference type="IntAct" id="P21555">
    <property type="interactions" value="1"/>
</dbReference>
<dbReference type="STRING" id="10116.ENSRNOP00000018952"/>
<dbReference type="BindingDB" id="P21555"/>
<dbReference type="ChEMBL" id="CHEMBL2587"/>
<dbReference type="GuidetoPHARMACOLOGY" id="305"/>
<dbReference type="CarbonylDB" id="P21555"/>
<dbReference type="GlyCosmos" id="P21555">
    <property type="glycosylation" value="3 sites, No reported glycans"/>
</dbReference>
<dbReference type="GlyGen" id="P21555">
    <property type="glycosylation" value="3 sites"/>
</dbReference>
<dbReference type="iPTMnet" id="P21555"/>
<dbReference type="PhosphoSitePlus" id="P21555"/>
<dbReference type="SwissPalm" id="P21555"/>
<dbReference type="PaxDb" id="10116-ENSRNOP00000018952"/>
<dbReference type="UCSC" id="RGD:3198">
    <property type="organism name" value="rat"/>
</dbReference>
<dbReference type="AGR" id="RGD:3198"/>
<dbReference type="RGD" id="3198">
    <property type="gene designation" value="Npy1r"/>
</dbReference>
<dbReference type="eggNOG" id="KOG3656">
    <property type="taxonomic scope" value="Eukaryota"/>
</dbReference>
<dbReference type="InParanoid" id="P21555"/>
<dbReference type="OrthoDB" id="9046662at2759"/>
<dbReference type="PhylomeDB" id="P21555"/>
<dbReference type="Reactome" id="R-RNO-375276">
    <property type="pathway name" value="Peptide ligand-binding receptors"/>
</dbReference>
<dbReference type="Reactome" id="R-RNO-418594">
    <property type="pathway name" value="G alpha (i) signalling events"/>
</dbReference>
<dbReference type="PRO" id="PR:P21555"/>
<dbReference type="Proteomes" id="UP000002494">
    <property type="component" value="Unplaced"/>
</dbReference>
<dbReference type="GO" id="GO:0030424">
    <property type="term" value="C:axon"/>
    <property type="evidence" value="ECO:0000314"/>
    <property type="project" value="RGD"/>
</dbReference>
<dbReference type="GO" id="GO:0098978">
    <property type="term" value="C:glutamatergic synapse"/>
    <property type="evidence" value="ECO:0000314"/>
    <property type="project" value="SynGO"/>
</dbReference>
<dbReference type="GO" id="GO:0043005">
    <property type="term" value="C:neuron projection"/>
    <property type="evidence" value="ECO:0000318"/>
    <property type="project" value="GO_Central"/>
</dbReference>
<dbReference type="GO" id="GO:0098992">
    <property type="term" value="C:neuronal dense core vesicle"/>
    <property type="evidence" value="ECO:0000314"/>
    <property type="project" value="SynGO"/>
</dbReference>
<dbReference type="GO" id="GO:0005886">
    <property type="term" value="C:plasma membrane"/>
    <property type="evidence" value="ECO:0000318"/>
    <property type="project" value="GO_Central"/>
</dbReference>
<dbReference type="GO" id="GO:0042734">
    <property type="term" value="C:presynaptic membrane"/>
    <property type="evidence" value="ECO:0000314"/>
    <property type="project" value="SynGO"/>
</dbReference>
<dbReference type="GO" id="GO:0008021">
    <property type="term" value="C:synaptic vesicle"/>
    <property type="evidence" value="ECO:0000314"/>
    <property type="project" value="RGD"/>
</dbReference>
<dbReference type="GO" id="GO:0042923">
    <property type="term" value="F:neuropeptide binding"/>
    <property type="evidence" value="ECO:0000318"/>
    <property type="project" value="GO_Central"/>
</dbReference>
<dbReference type="GO" id="GO:0008188">
    <property type="term" value="F:neuropeptide receptor activity"/>
    <property type="evidence" value="ECO:0000318"/>
    <property type="project" value="GO_Central"/>
</dbReference>
<dbReference type="GO" id="GO:0004983">
    <property type="term" value="F:neuropeptide Y receptor activity"/>
    <property type="evidence" value="ECO:0000266"/>
    <property type="project" value="RGD"/>
</dbReference>
<dbReference type="GO" id="GO:0001602">
    <property type="term" value="F:pancreatic polypeptide receptor activity"/>
    <property type="evidence" value="ECO:0000266"/>
    <property type="project" value="RGD"/>
</dbReference>
<dbReference type="GO" id="GO:0001601">
    <property type="term" value="F:peptide YY receptor activity"/>
    <property type="evidence" value="ECO:0000266"/>
    <property type="project" value="RGD"/>
</dbReference>
<dbReference type="GO" id="GO:0007631">
    <property type="term" value="P:feeding behavior"/>
    <property type="evidence" value="ECO:0000266"/>
    <property type="project" value="RGD"/>
</dbReference>
<dbReference type="GO" id="GO:0006006">
    <property type="term" value="P:glucose metabolic process"/>
    <property type="evidence" value="ECO:0000266"/>
    <property type="project" value="RGD"/>
</dbReference>
<dbReference type="GO" id="GO:0007626">
    <property type="term" value="P:locomotory behavior"/>
    <property type="evidence" value="ECO:0000266"/>
    <property type="project" value="RGD"/>
</dbReference>
<dbReference type="GO" id="GO:0051481">
    <property type="term" value="P:negative regulation of cytosolic calcium ion concentration"/>
    <property type="evidence" value="ECO:0000315"/>
    <property type="project" value="RGD"/>
</dbReference>
<dbReference type="GO" id="GO:0046888">
    <property type="term" value="P:negative regulation of hormone secretion"/>
    <property type="evidence" value="ECO:0000315"/>
    <property type="project" value="RGD"/>
</dbReference>
<dbReference type="GO" id="GO:0003151">
    <property type="term" value="P:outflow tract morphogenesis"/>
    <property type="evidence" value="ECO:0000266"/>
    <property type="project" value="RGD"/>
</dbReference>
<dbReference type="GO" id="GO:0030432">
    <property type="term" value="P:peristalsis"/>
    <property type="evidence" value="ECO:0000315"/>
    <property type="project" value="RGD"/>
</dbReference>
<dbReference type="GO" id="GO:0045542">
    <property type="term" value="P:positive regulation of cholesterol biosynthetic process"/>
    <property type="evidence" value="ECO:0000315"/>
    <property type="project" value="RGD"/>
</dbReference>
<dbReference type="GO" id="GO:0045907">
    <property type="term" value="P:positive regulation of vasoconstriction"/>
    <property type="evidence" value="ECO:0000315"/>
    <property type="project" value="RGD"/>
</dbReference>
<dbReference type="GO" id="GO:0008217">
    <property type="term" value="P:regulation of blood pressure"/>
    <property type="evidence" value="ECO:0000266"/>
    <property type="project" value="RGD"/>
</dbReference>
<dbReference type="GO" id="GO:0040014">
    <property type="term" value="P:regulation of multicellular organism growth"/>
    <property type="evidence" value="ECO:0000266"/>
    <property type="project" value="RGD"/>
</dbReference>
<dbReference type="GO" id="GO:0099509">
    <property type="term" value="P:regulation of presynaptic cytosolic calcium ion concentration"/>
    <property type="evidence" value="ECO:0000314"/>
    <property type="project" value="SynGO"/>
</dbReference>
<dbReference type="GO" id="GO:2000300">
    <property type="term" value="P:regulation of synaptic vesicle exocytosis"/>
    <property type="evidence" value="ECO:0000314"/>
    <property type="project" value="SynGO"/>
</dbReference>
<dbReference type="GO" id="GO:0051602">
    <property type="term" value="P:response to electrical stimulus"/>
    <property type="evidence" value="ECO:0000270"/>
    <property type="project" value="RGD"/>
</dbReference>
<dbReference type="GO" id="GO:0032355">
    <property type="term" value="P:response to estradiol"/>
    <property type="evidence" value="ECO:0000270"/>
    <property type="project" value="RGD"/>
</dbReference>
<dbReference type="GO" id="GO:0045471">
    <property type="term" value="P:response to ethanol"/>
    <property type="evidence" value="ECO:0000270"/>
    <property type="project" value="RGD"/>
</dbReference>
<dbReference type="GO" id="GO:0043278">
    <property type="term" value="P:response to morphine"/>
    <property type="evidence" value="ECO:0000315"/>
    <property type="project" value="RGD"/>
</dbReference>
<dbReference type="GO" id="GO:0019233">
    <property type="term" value="P:sensory perception of pain"/>
    <property type="evidence" value="ECO:0000266"/>
    <property type="project" value="RGD"/>
</dbReference>
<dbReference type="GO" id="GO:0099538">
    <property type="term" value="P:synaptic signaling via neuropeptide"/>
    <property type="evidence" value="ECO:0000314"/>
    <property type="project" value="SynGO"/>
</dbReference>
<dbReference type="CDD" id="cd15395">
    <property type="entry name" value="7tmA_NPY1R"/>
    <property type="match status" value="1"/>
</dbReference>
<dbReference type="FunFam" id="1.20.1070.10:FF:000062">
    <property type="entry name" value="Neuropeptide Y receptor type 1"/>
    <property type="match status" value="1"/>
</dbReference>
<dbReference type="Gene3D" id="1.20.1070.10">
    <property type="entry name" value="Rhodopsin 7-helix transmembrane proteins"/>
    <property type="match status" value="1"/>
</dbReference>
<dbReference type="InterPro" id="IPR000276">
    <property type="entry name" value="GPCR_Rhodpsn"/>
</dbReference>
<dbReference type="InterPro" id="IPR017452">
    <property type="entry name" value="GPCR_Rhodpsn_7TM"/>
</dbReference>
<dbReference type="InterPro" id="IPR000351">
    <property type="entry name" value="NPY1_rcpt"/>
</dbReference>
<dbReference type="InterPro" id="IPR000611">
    <property type="entry name" value="NPY_rcpt"/>
</dbReference>
<dbReference type="PANTHER" id="PTHR24235">
    <property type="entry name" value="NEUROPEPTIDE Y RECEPTOR"/>
    <property type="match status" value="1"/>
</dbReference>
<dbReference type="PANTHER" id="PTHR24235:SF24">
    <property type="entry name" value="NEUROPEPTIDE Y RECEPTOR TYPE 1"/>
    <property type="match status" value="1"/>
</dbReference>
<dbReference type="Pfam" id="PF00001">
    <property type="entry name" value="7tm_1"/>
    <property type="match status" value="1"/>
</dbReference>
<dbReference type="PRINTS" id="PR00237">
    <property type="entry name" value="GPCRRHODOPSN"/>
</dbReference>
<dbReference type="PRINTS" id="PR01013">
    <property type="entry name" value="NRPEPTIDEY1R"/>
</dbReference>
<dbReference type="PRINTS" id="PR01012">
    <property type="entry name" value="NRPEPTIDEYR"/>
</dbReference>
<dbReference type="SUPFAM" id="SSF81321">
    <property type="entry name" value="Family A G protein-coupled receptor-like"/>
    <property type="match status" value="1"/>
</dbReference>
<dbReference type="PROSITE" id="PS00237">
    <property type="entry name" value="G_PROTEIN_RECEP_F1_1"/>
    <property type="match status" value="1"/>
</dbReference>
<dbReference type="PROSITE" id="PS50262">
    <property type="entry name" value="G_PROTEIN_RECEP_F1_2"/>
    <property type="match status" value="1"/>
</dbReference>